<name>POLG_KOKV</name>
<proteinExistence type="evidence at protein level"/>
<evidence type="ECO:0000250" key="1">
    <source>
        <dbReference type="UniProtKB" id="P03314"/>
    </source>
</evidence>
<evidence type="ECO:0000250" key="2">
    <source>
        <dbReference type="UniProtKB" id="P06935"/>
    </source>
</evidence>
<evidence type="ECO:0000250" key="3">
    <source>
        <dbReference type="UniProtKB" id="P14335"/>
    </source>
</evidence>
<evidence type="ECO:0000250" key="4">
    <source>
        <dbReference type="UniProtKB" id="P14336"/>
    </source>
</evidence>
<evidence type="ECO:0000250" key="5">
    <source>
        <dbReference type="UniProtKB" id="P14340"/>
    </source>
</evidence>
<evidence type="ECO:0000250" key="6">
    <source>
        <dbReference type="UniProtKB" id="P17763"/>
    </source>
</evidence>
<evidence type="ECO:0000250" key="7">
    <source>
        <dbReference type="UniProtKB" id="P29990"/>
    </source>
</evidence>
<evidence type="ECO:0000250" key="8">
    <source>
        <dbReference type="UniProtKB" id="Q32ZE1"/>
    </source>
</evidence>
<evidence type="ECO:0000250" key="9">
    <source>
        <dbReference type="UniProtKB" id="Q6YMS4"/>
    </source>
</evidence>
<evidence type="ECO:0000250" key="10">
    <source>
        <dbReference type="UniProtKB" id="Q9Q6P4"/>
    </source>
</evidence>
<evidence type="ECO:0000255" key="11"/>
<evidence type="ECO:0000255" key="12">
    <source>
        <dbReference type="PROSITE-ProRule" id="PRU00498"/>
    </source>
</evidence>
<evidence type="ECO:0000255" key="13">
    <source>
        <dbReference type="PROSITE-ProRule" id="PRU00539"/>
    </source>
</evidence>
<evidence type="ECO:0000255" key="14">
    <source>
        <dbReference type="PROSITE-ProRule" id="PRU00541"/>
    </source>
</evidence>
<evidence type="ECO:0000255" key="15">
    <source>
        <dbReference type="PROSITE-ProRule" id="PRU00542"/>
    </source>
</evidence>
<evidence type="ECO:0000255" key="16">
    <source>
        <dbReference type="PROSITE-ProRule" id="PRU00859"/>
    </source>
</evidence>
<evidence type="ECO:0000255" key="17">
    <source>
        <dbReference type="PROSITE-ProRule" id="PRU00860"/>
    </source>
</evidence>
<evidence type="ECO:0000255" key="18">
    <source>
        <dbReference type="PROSITE-ProRule" id="PRU00924"/>
    </source>
</evidence>
<evidence type="ECO:0000269" key="19">
    <source>
    </source>
</evidence>
<evidence type="ECO:0000305" key="20"/>
<evidence type="ECO:0000312" key="21">
    <source>
        <dbReference type="EMBL" id="AAV34157.1"/>
    </source>
</evidence>
<evidence type="ECO:0007829" key="22">
    <source>
        <dbReference type="PDB" id="2V6I"/>
    </source>
</evidence>
<dbReference type="EC" id="3.4.21.91"/>
<dbReference type="EC" id="3.6.1.15" evidence="19"/>
<dbReference type="EC" id="3.6.4.13" evidence="19"/>
<dbReference type="EC" id="2.1.1.56" evidence="18"/>
<dbReference type="EC" id="2.1.1.57" evidence="18"/>
<dbReference type="EC" id="2.7.7.48" evidence="18"/>
<dbReference type="EMBL" id="AY632541">
    <property type="protein sequence ID" value="AAV34157.1"/>
    <property type="molecule type" value="Genomic_RNA"/>
</dbReference>
<dbReference type="RefSeq" id="YP_001040007.1">
    <property type="nucleotide sequence ID" value="NC_009029.2"/>
</dbReference>
<dbReference type="PDB" id="2V6I">
    <property type="method" value="X-ray"/>
    <property type="resolution" value="2.10 A"/>
    <property type="chains" value="A=1678-2108"/>
</dbReference>
<dbReference type="PDB" id="2V6J">
    <property type="method" value="X-ray"/>
    <property type="resolution" value="2.30 A"/>
    <property type="chains" value="A=1678-2108"/>
</dbReference>
<dbReference type="PDBsum" id="2V6I"/>
<dbReference type="PDBsum" id="2V6J"/>
<dbReference type="SMR" id="Q32ZD5"/>
<dbReference type="MEROPS" id="S07.001"/>
<dbReference type="GeneID" id="5075791"/>
<dbReference type="KEGG" id="vg:5075791"/>
<dbReference type="BRENDA" id="3.4.21.91">
    <property type="organism ID" value="10317"/>
</dbReference>
<dbReference type="EvolutionaryTrace" id="Q32ZD5"/>
<dbReference type="Proteomes" id="UP000124420">
    <property type="component" value="Genome"/>
</dbReference>
<dbReference type="GO" id="GO:0005576">
    <property type="term" value="C:extracellular region"/>
    <property type="evidence" value="ECO:0007669"/>
    <property type="project" value="UniProtKB-SubCell"/>
</dbReference>
<dbReference type="GO" id="GO:0044167">
    <property type="term" value="C:host cell endoplasmic reticulum membrane"/>
    <property type="evidence" value="ECO:0007669"/>
    <property type="project" value="UniProtKB-SubCell"/>
</dbReference>
<dbReference type="GO" id="GO:0042025">
    <property type="term" value="C:host cell nucleus"/>
    <property type="evidence" value="ECO:0007669"/>
    <property type="project" value="UniProtKB-SubCell"/>
</dbReference>
<dbReference type="GO" id="GO:0044220">
    <property type="term" value="C:host cell perinuclear region of cytoplasm"/>
    <property type="evidence" value="ECO:0007669"/>
    <property type="project" value="UniProtKB-SubCell"/>
</dbReference>
<dbReference type="GO" id="GO:0016020">
    <property type="term" value="C:membrane"/>
    <property type="evidence" value="ECO:0007669"/>
    <property type="project" value="UniProtKB-KW"/>
</dbReference>
<dbReference type="GO" id="GO:0019028">
    <property type="term" value="C:viral capsid"/>
    <property type="evidence" value="ECO:0007669"/>
    <property type="project" value="UniProtKB-KW"/>
</dbReference>
<dbReference type="GO" id="GO:0055036">
    <property type="term" value="C:virion membrane"/>
    <property type="evidence" value="ECO:0007669"/>
    <property type="project" value="UniProtKB-SubCell"/>
</dbReference>
<dbReference type="GO" id="GO:0005524">
    <property type="term" value="F:ATP binding"/>
    <property type="evidence" value="ECO:0007669"/>
    <property type="project" value="UniProtKB-KW"/>
</dbReference>
<dbReference type="GO" id="GO:0016887">
    <property type="term" value="F:ATP hydrolysis activity"/>
    <property type="evidence" value="ECO:0007669"/>
    <property type="project" value="RHEA"/>
</dbReference>
<dbReference type="GO" id="GO:0003725">
    <property type="term" value="F:double-stranded RNA binding"/>
    <property type="evidence" value="ECO:0007669"/>
    <property type="project" value="InterPro"/>
</dbReference>
<dbReference type="GO" id="GO:0046872">
    <property type="term" value="F:metal ion binding"/>
    <property type="evidence" value="ECO:0007669"/>
    <property type="project" value="UniProtKB-KW"/>
</dbReference>
<dbReference type="GO" id="GO:0004483">
    <property type="term" value="F:mRNA (nucleoside-2'-O-)-methyltransferase activity"/>
    <property type="evidence" value="ECO:0007669"/>
    <property type="project" value="UniProtKB-EC"/>
</dbReference>
<dbReference type="GO" id="GO:0004482">
    <property type="term" value="F:mRNA 5'-cap (guanine-N7-)-methyltransferase activity"/>
    <property type="evidence" value="ECO:0007669"/>
    <property type="project" value="UniProtKB-EC"/>
</dbReference>
<dbReference type="GO" id="GO:0046983">
    <property type="term" value="F:protein dimerization activity"/>
    <property type="evidence" value="ECO:0007669"/>
    <property type="project" value="InterPro"/>
</dbReference>
<dbReference type="GO" id="GO:0003724">
    <property type="term" value="F:RNA helicase activity"/>
    <property type="evidence" value="ECO:0007669"/>
    <property type="project" value="UniProtKB-EC"/>
</dbReference>
<dbReference type="GO" id="GO:0003968">
    <property type="term" value="F:RNA-directed RNA polymerase activity"/>
    <property type="evidence" value="ECO:0007669"/>
    <property type="project" value="UniProtKB-KW"/>
</dbReference>
<dbReference type="GO" id="GO:0004252">
    <property type="term" value="F:serine-type endopeptidase activity"/>
    <property type="evidence" value="ECO:0007669"/>
    <property type="project" value="InterPro"/>
</dbReference>
<dbReference type="GO" id="GO:0005198">
    <property type="term" value="F:structural molecule activity"/>
    <property type="evidence" value="ECO:0007669"/>
    <property type="project" value="InterPro"/>
</dbReference>
<dbReference type="GO" id="GO:0039654">
    <property type="term" value="P:fusion of virus membrane with host endosome membrane"/>
    <property type="evidence" value="ECO:0007669"/>
    <property type="project" value="UniProtKB-KW"/>
</dbReference>
<dbReference type="GO" id="GO:0006508">
    <property type="term" value="P:proteolysis"/>
    <property type="evidence" value="ECO:0007669"/>
    <property type="project" value="UniProtKB-KW"/>
</dbReference>
<dbReference type="GO" id="GO:0046718">
    <property type="term" value="P:symbiont entry into host cell"/>
    <property type="evidence" value="ECO:0007669"/>
    <property type="project" value="UniProtKB-KW"/>
</dbReference>
<dbReference type="GO" id="GO:0039520">
    <property type="term" value="P:symbiont-mediated activation of host autophagy"/>
    <property type="evidence" value="ECO:0007669"/>
    <property type="project" value="UniProtKB-KW"/>
</dbReference>
<dbReference type="GO" id="GO:0052170">
    <property type="term" value="P:symbiont-mediated suppression of host innate immune response"/>
    <property type="evidence" value="ECO:0007669"/>
    <property type="project" value="UniProtKB-KW"/>
</dbReference>
<dbReference type="GO" id="GO:0039563">
    <property type="term" value="P:symbiont-mediated suppression of host JAK-STAT cascade via inhibition of STAT1 activity"/>
    <property type="evidence" value="ECO:0007669"/>
    <property type="project" value="UniProtKB-KW"/>
</dbReference>
<dbReference type="GO" id="GO:0039564">
    <property type="term" value="P:symbiont-mediated suppression of host JAK-STAT cascade via inhibition of STAT2 activity"/>
    <property type="evidence" value="ECO:0007669"/>
    <property type="project" value="UniProtKB-KW"/>
</dbReference>
<dbReference type="GO" id="GO:0039502">
    <property type="term" value="P:symbiont-mediated suppression of host type I interferon-mediated signaling pathway"/>
    <property type="evidence" value="ECO:0007669"/>
    <property type="project" value="UniProtKB-KW"/>
</dbReference>
<dbReference type="GO" id="GO:0039694">
    <property type="term" value="P:viral RNA genome replication"/>
    <property type="evidence" value="ECO:0007669"/>
    <property type="project" value="InterPro"/>
</dbReference>
<dbReference type="GO" id="GO:0019062">
    <property type="term" value="P:virion attachment to host cell"/>
    <property type="evidence" value="ECO:0007669"/>
    <property type="project" value="UniProtKB-KW"/>
</dbReference>
<dbReference type="CDD" id="cd20761">
    <property type="entry name" value="capping_2-OMTase_Flaviviridae"/>
    <property type="match status" value="1"/>
</dbReference>
<dbReference type="CDD" id="cd17931">
    <property type="entry name" value="DEXHc_viral_Ns3"/>
    <property type="match status" value="1"/>
</dbReference>
<dbReference type="CDD" id="cd12149">
    <property type="entry name" value="Flavi_E_C"/>
    <property type="match status" value="1"/>
</dbReference>
<dbReference type="CDD" id="cd17038">
    <property type="entry name" value="Flavi_M"/>
    <property type="match status" value="1"/>
</dbReference>
<dbReference type="CDD" id="cd23204">
    <property type="entry name" value="Flavivirus_RdRp"/>
    <property type="match status" value="1"/>
</dbReference>
<dbReference type="CDD" id="cd18806">
    <property type="entry name" value="SF2_C_viral"/>
    <property type="match status" value="1"/>
</dbReference>
<dbReference type="FunFam" id="1.20.1280.260:FF:000001">
    <property type="entry name" value="Envelope glycoprotein"/>
    <property type="match status" value="1"/>
</dbReference>
<dbReference type="FunFam" id="2.60.260.50:FF:000001">
    <property type="entry name" value="Genome polyprotein"/>
    <property type="match status" value="1"/>
</dbReference>
<dbReference type="FunFam" id="3.30.70.2840:FF:000002">
    <property type="entry name" value="Genome polyprotein"/>
    <property type="match status" value="1"/>
</dbReference>
<dbReference type="FunFam" id="3.30.70.2840:FF:000004">
    <property type="entry name" value="Genome polyprotein"/>
    <property type="match status" value="1"/>
</dbReference>
<dbReference type="FunFam" id="3.40.50.150:FF:000105">
    <property type="entry name" value="Genome polyprotein"/>
    <property type="match status" value="1"/>
</dbReference>
<dbReference type="FunFam" id="3.40.50.300:FF:000763">
    <property type="entry name" value="Genome polyprotein"/>
    <property type="match status" value="1"/>
</dbReference>
<dbReference type="Gene3D" id="1.10.10.930">
    <property type="match status" value="1"/>
</dbReference>
<dbReference type="Gene3D" id="1.10.260.90">
    <property type="match status" value="1"/>
</dbReference>
<dbReference type="Gene3D" id="1.20.1280.260">
    <property type="match status" value="1"/>
</dbReference>
<dbReference type="Gene3D" id="2.40.10.120">
    <property type="match status" value="2"/>
</dbReference>
<dbReference type="Gene3D" id="2.60.40.350">
    <property type="match status" value="1"/>
</dbReference>
<dbReference type="Gene3D" id="1.10.8.970">
    <property type="entry name" value="Flavivirus envelope glycoprotein M-like"/>
    <property type="match status" value="1"/>
</dbReference>
<dbReference type="Gene3D" id="2.60.260.50">
    <property type="entry name" value="Flavivirus polyprotein propeptide domain"/>
    <property type="match status" value="1"/>
</dbReference>
<dbReference type="Gene3D" id="3.30.70.2840">
    <property type="entry name" value="Flavivirus RNA-directed RNA polymerase, thumb domain"/>
    <property type="match status" value="3"/>
</dbReference>
<dbReference type="Gene3D" id="3.40.50.300">
    <property type="entry name" value="P-loop containing nucleotide triphosphate hydrolases"/>
    <property type="match status" value="2"/>
</dbReference>
<dbReference type="Gene3D" id="2.60.98.10">
    <property type="entry name" value="Tick-borne Encephalitis virus Glycoprotein, domain 1"/>
    <property type="match status" value="1"/>
</dbReference>
<dbReference type="Gene3D" id="3.40.50.150">
    <property type="entry name" value="Vaccinia Virus protein VP39"/>
    <property type="match status" value="1"/>
</dbReference>
<dbReference type="Gene3D" id="3.30.67.10">
    <property type="entry name" value="Viral Envelope Glycoprotein, domain 2"/>
    <property type="match status" value="1"/>
</dbReference>
<dbReference type="Gene3D" id="3.30.387.10">
    <property type="entry name" value="Viral Envelope Glycoprotein, domain 3"/>
    <property type="match status" value="1"/>
</dbReference>
<dbReference type="InterPro" id="IPR043502">
    <property type="entry name" value="DNA/RNA_pol_sf"/>
</dbReference>
<dbReference type="InterPro" id="IPR000069">
    <property type="entry name" value="Env_glycoprot_M_flavivir"/>
</dbReference>
<dbReference type="InterPro" id="IPR038302">
    <property type="entry name" value="Env_glycoprot_M_sf_flavivir"/>
</dbReference>
<dbReference type="InterPro" id="IPR013755">
    <property type="entry name" value="Flav_gly_cen_dom_subdom1"/>
</dbReference>
<dbReference type="InterPro" id="IPR001122">
    <property type="entry name" value="Flavi_capsidC"/>
</dbReference>
<dbReference type="InterPro" id="IPR037172">
    <property type="entry name" value="Flavi_capsidC_sf"/>
</dbReference>
<dbReference type="InterPro" id="IPR011492">
    <property type="entry name" value="Flavi_DEAD"/>
</dbReference>
<dbReference type="InterPro" id="IPR027287">
    <property type="entry name" value="Flavi_E_Ig-like"/>
</dbReference>
<dbReference type="InterPro" id="IPR026470">
    <property type="entry name" value="Flavi_E_Stem/Anchor_dom"/>
</dbReference>
<dbReference type="InterPro" id="IPR038345">
    <property type="entry name" value="Flavi_E_Stem/Anchor_dom_sf"/>
</dbReference>
<dbReference type="InterPro" id="IPR011998">
    <property type="entry name" value="Flavi_Glycoprot_E_cen/dimer"/>
</dbReference>
<dbReference type="InterPro" id="IPR001157">
    <property type="entry name" value="Flavi_NS1"/>
</dbReference>
<dbReference type="InterPro" id="IPR000752">
    <property type="entry name" value="Flavi_NS2A"/>
</dbReference>
<dbReference type="InterPro" id="IPR000487">
    <property type="entry name" value="Flavi_NS2B"/>
</dbReference>
<dbReference type="InterPro" id="IPR001850">
    <property type="entry name" value="Flavi_NS3_S7"/>
</dbReference>
<dbReference type="InterPro" id="IPR000404">
    <property type="entry name" value="Flavi_NS4A"/>
</dbReference>
<dbReference type="InterPro" id="IPR001528">
    <property type="entry name" value="Flavi_NS4B"/>
</dbReference>
<dbReference type="InterPro" id="IPR046811">
    <property type="entry name" value="Flavi_NS5_thumb"/>
</dbReference>
<dbReference type="InterPro" id="IPR002535">
    <property type="entry name" value="Flavi_propep"/>
</dbReference>
<dbReference type="InterPro" id="IPR038688">
    <property type="entry name" value="Flavi_propep_sf"/>
</dbReference>
<dbReference type="InterPro" id="IPR047530">
    <property type="entry name" value="Flavi_RdRp"/>
</dbReference>
<dbReference type="InterPro" id="IPR000208">
    <property type="entry name" value="Flavi_RdRp_fingers/palm"/>
</dbReference>
<dbReference type="InterPro" id="IPR000336">
    <property type="entry name" value="Flavivir/Alphavir_Ig-like_sf"/>
</dbReference>
<dbReference type="InterPro" id="IPR014412">
    <property type="entry name" value="Gen_Poly_FLV"/>
</dbReference>
<dbReference type="InterPro" id="IPR036253">
    <property type="entry name" value="Glycoprot_cen/dimer_sf"/>
</dbReference>
<dbReference type="InterPro" id="IPR038055">
    <property type="entry name" value="Glycoprot_E_dimer_dom"/>
</dbReference>
<dbReference type="InterPro" id="IPR013756">
    <property type="entry name" value="GlyE_cen_dom_subdom2"/>
</dbReference>
<dbReference type="InterPro" id="IPR014001">
    <property type="entry name" value="Helicase_ATP-bd"/>
</dbReference>
<dbReference type="InterPro" id="IPR001650">
    <property type="entry name" value="Helicase_C-like"/>
</dbReference>
<dbReference type="InterPro" id="IPR014756">
    <property type="entry name" value="Ig_E-set"/>
</dbReference>
<dbReference type="InterPro" id="IPR026490">
    <property type="entry name" value="mRNA_cap_0/1_MeTrfase"/>
</dbReference>
<dbReference type="InterPro" id="IPR049486">
    <property type="entry name" value="NS3-hel_C_flaviviridae"/>
</dbReference>
<dbReference type="InterPro" id="IPR027417">
    <property type="entry name" value="P-loop_NTPase"/>
</dbReference>
<dbReference type="InterPro" id="IPR009003">
    <property type="entry name" value="Peptidase_S1_PA"/>
</dbReference>
<dbReference type="InterPro" id="IPR007094">
    <property type="entry name" value="RNA-dir_pol_PSvirus"/>
</dbReference>
<dbReference type="InterPro" id="IPR002877">
    <property type="entry name" value="RNA_MeTrfase_FtsJ_dom"/>
</dbReference>
<dbReference type="InterPro" id="IPR029063">
    <property type="entry name" value="SAM-dependent_MTases_sf"/>
</dbReference>
<dbReference type="NCBIfam" id="TIGR04240">
    <property type="entry name" value="flavi_E_stem"/>
    <property type="match status" value="1"/>
</dbReference>
<dbReference type="Pfam" id="PF20907">
    <property type="entry name" value="Flav_NS3-hel_C"/>
    <property type="match status" value="1"/>
</dbReference>
<dbReference type="Pfam" id="PF01003">
    <property type="entry name" value="Flavi_capsid"/>
    <property type="match status" value="1"/>
</dbReference>
<dbReference type="Pfam" id="PF07652">
    <property type="entry name" value="Flavi_DEAD"/>
    <property type="match status" value="1"/>
</dbReference>
<dbReference type="Pfam" id="PF21659">
    <property type="entry name" value="Flavi_E_stem"/>
    <property type="match status" value="1"/>
</dbReference>
<dbReference type="Pfam" id="PF02832">
    <property type="entry name" value="Flavi_glycop_C"/>
    <property type="match status" value="1"/>
</dbReference>
<dbReference type="Pfam" id="PF00869">
    <property type="entry name" value="Flavi_glycoprot"/>
    <property type="match status" value="1"/>
</dbReference>
<dbReference type="Pfam" id="PF01004">
    <property type="entry name" value="Flavi_M"/>
    <property type="match status" value="1"/>
</dbReference>
<dbReference type="Pfam" id="PF00948">
    <property type="entry name" value="Flavi_NS1"/>
    <property type="match status" value="1"/>
</dbReference>
<dbReference type="Pfam" id="PF01005">
    <property type="entry name" value="Flavi_NS2A"/>
    <property type="match status" value="1"/>
</dbReference>
<dbReference type="Pfam" id="PF01002">
    <property type="entry name" value="Flavi_NS2B"/>
    <property type="match status" value="1"/>
</dbReference>
<dbReference type="Pfam" id="PF01350">
    <property type="entry name" value="Flavi_NS4A"/>
    <property type="match status" value="1"/>
</dbReference>
<dbReference type="Pfam" id="PF01349">
    <property type="entry name" value="Flavi_NS4B"/>
    <property type="match status" value="1"/>
</dbReference>
<dbReference type="Pfam" id="PF00972">
    <property type="entry name" value="Flavi_NS5"/>
    <property type="match status" value="1"/>
</dbReference>
<dbReference type="Pfam" id="PF20483">
    <property type="entry name" value="Flavi_NS5_thumb"/>
    <property type="match status" value="1"/>
</dbReference>
<dbReference type="Pfam" id="PF01570">
    <property type="entry name" value="Flavi_propep"/>
    <property type="match status" value="1"/>
</dbReference>
<dbReference type="Pfam" id="PF01728">
    <property type="entry name" value="FtsJ"/>
    <property type="match status" value="1"/>
</dbReference>
<dbReference type="Pfam" id="PF00949">
    <property type="entry name" value="Peptidase_S7"/>
    <property type="match status" value="1"/>
</dbReference>
<dbReference type="PIRSF" id="PIRSF003817">
    <property type="entry name" value="Gen_Poly_FLV"/>
    <property type="match status" value="1"/>
</dbReference>
<dbReference type="SMART" id="SM00487">
    <property type="entry name" value="DEXDc"/>
    <property type="match status" value="1"/>
</dbReference>
<dbReference type="SMART" id="SM00490">
    <property type="entry name" value="HELICc"/>
    <property type="match status" value="1"/>
</dbReference>
<dbReference type="SUPFAM" id="SSF56672">
    <property type="entry name" value="DNA/RNA polymerases"/>
    <property type="match status" value="1"/>
</dbReference>
<dbReference type="SUPFAM" id="SSF81296">
    <property type="entry name" value="E set domains"/>
    <property type="match status" value="1"/>
</dbReference>
<dbReference type="SUPFAM" id="SSF101257">
    <property type="entry name" value="Flavivirus capsid protein C"/>
    <property type="match status" value="1"/>
</dbReference>
<dbReference type="SUPFAM" id="SSF52540">
    <property type="entry name" value="P-loop containing nucleoside triphosphate hydrolases"/>
    <property type="match status" value="2"/>
</dbReference>
<dbReference type="SUPFAM" id="SSF53335">
    <property type="entry name" value="S-adenosyl-L-methionine-dependent methyltransferases"/>
    <property type="match status" value="1"/>
</dbReference>
<dbReference type="SUPFAM" id="SSF50494">
    <property type="entry name" value="Trypsin-like serine proteases"/>
    <property type="match status" value="1"/>
</dbReference>
<dbReference type="SUPFAM" id="SSF56983">
    <property type="entry name" value="Viral glycoprotein, central and dimerisation domains"/>
    <property type="match status" value="1"/>
</dbReference>
<dbReference type="PROSITE" id="PS51527">
    <property type="entry name" value="FLAVIVIRUS_NS2B"/>
    <property type="match status" value="1"/>
</dbReference>
<dbReference type="PROSITE" id="PS51528">
    <property type="entry name" value="FLAVIVIRUS_NS3PRO"/>
    <property type="match status" value="1"/>
</dbReference>
<dbReference type="PROSITE" id="PS51192">
    <property type="entry name" value="HELICASE_ATP_BIND_1"/>
    <property type="match status" value="1"/>
</dbReference>
<dbReference type="PROSITE" id="PS51194">
    <property type="entry name" value="HELICASE_CTER"/>
    <property type="match status" value="1"/>
</dbReference>
<dbReference type="PROSITE" id="PS50507">
    <property type="entry name" value="RDRP_SSRNA_POS"/>
    <property type="match status" value="1"/>
</dbReference>
<dbReference type="PROSITE" id="PS51591">
    <property type="entry name" value="RNA_CAP01_NS5_MT"/>
    <property type="match status" value="1"/>
</dbReference>
<accession>Q32ZD5</accession>
<keyword id="KW-0002">3D-structure</keyword>
<keyword id="KW-0007">Acetylation</keyword>
<keyword id="KW-1072">Activation of host autophagy by virus</keyword>
<keyword id="KW-0067">ATP-binding</keyword>
<keyword id="KW-0167">Capsid protein</keyword>
<keyword id="KW-0165">Cleavage on pair of basic residues</keyword>
<keyword id="KW-0175">Coiled coil</keyword>
<keyword id="KW-1015">Disulfide bond</keyword>
<keyword id="KW-1170">Fusion of virus membrane with host endosomal membrane</keyword>
<keyword id="KW-1168">Fusion of virus membrane with host membrane</keyword>
<keyword id="KW-0325">Glycoprotein</keyword>
<keyword id="KW-0347">Helicase</keyword>
<keyword id="KW-1035">Host cytoplasm</keyword>
<keyword id="KW-1038">Host endoplasmic reticulum</keyword>
<keyword id="KW-1043">Host membrane</keyword>
<keyword id="KW-1048">Host nucleus</keyword>
<keyword id="KW-0945">Host-virus interaction</keyword>
<keyword id="KW-0378">Hydrolase</keyword>
<keyword id="KW-1090">Inhibition of host innate immune response by virus</keyword>
<keyword id="KW-1114">Inhibition of host interferon signaling pathway by virus</keyword>
<keyword id="KW-1105">Inhibition of host STAT1 by virus</keyword>
<keyword id="KW-1106">Inhibition of host STAT2 by virus</keyword>
<keyword id="KW-0922">Interferon antiviral system evasion</keyword>
<keyword id="KW-0472">Membrane</keyword>
<keyword id="KW-0479">Metal-binding</keyword>
<keyword id="KW-0489">Methyltransferase</keyword>
<keyword id="KW-0506">mRNA capping</keyword>
<keyword id="KW-0507">mRNA processing</keyword>
<keyword id="KW-0547">Nucleotide-binding</keyword>
<keyword id="KW-0548">Nucleotidyltransferase</keyword>
<keyword id="KW-0597">Phosphoprotein</keyword>
<keyword id="KW-0645">Protease</keyword>
<keyword id="KW-0694">RNA-binding</keyword>
<keyword id="KW-0696">RNA-directed RNA polymerase</keyword>
<keyword id="KW-0949">S-adenosyl-L-methionine</keyword>
<keyword id="KW-0964">Secreted</keyword>
<keyword id="KW-0720">Serine protease</keyword>
<keyword id="KW-0941">Suppressor of RNA silencing</keyword>
<keyword id="KW-0808">Transferase</keyword>
<keyword id="KW-0812">Transmembrane</keyword>
<keyword id="KW-1133">Transmembrane helix</keyword>
<keyword id="KW-1161">Viral attachment to host cell</keyword>
<keyword id="KW-0899">Viral immunoevasion</keyword>
<keyword id="KW-1162">Viral penetration into host cytoplasm</keyword>
<keyword id="KW-0693">Viral RNA replication</keyword>
<keyword id="KW-0946">Virion</keyword>
<keyword id="KW-1160">Virus entry into host cell</keyword>
<keyword id="KW-0862">Zinc</keyword>
<organism>
    <name type="scientific">Kokobera virus</name>
    <name type="common">KOKV</name>
    <dbReference type="NCBI Taxonomy" id="44024"/>
    <lineage>
        <taxon>Viruses</taxon>
        <taxon>Riboviria</taxon>
        <taxon>Orthornavirae</taxon>
        <taxon>Kitrinoviricota</taxon>
        <taxon>Flasuviricetes</taxon>
        <taxon>Amarillovirales</taxon>
        <taxon>Flaviviridae</taxon>
        <taxon>Orthoflavivirus</taxon>
        <taxon>Orthoflavivirus kokoberaorum</taxon>
    </lineage>
</organism>
<protein>
    <recommendedName>
        <fullName>Genome polyprotein</fullName>
    </recommendedName>
    <component>
        <recommendedName>
            <fullName>Capsid protein C</fullName>
        </recommendedName>
        <alternativeName>
            <fullName>Core protein</fullName>
        </alternativeName>
    </component>
    <component>
        <recommendedName>
            <fullName>Protein prM</fullName>
        </recommendedName>
    </component>
    <component>
        <recommendedName>
            <fullName>Peptide pr</fullName>
        </recommendedName>
    </component>
    <component>
        <recommendedName>
            <fullName>Small envelope protein M</fullName>
        </recommendedName>
        <alternativeName>
            <fullName>Matrix protein</fullName>
        </alternativeName>
    </component>
    <component>
        <recommendedName>
            <fullName>Envelope protein E</fullName>
        </recommendedName>
    </component>
    <component>
        <recommendedName>
            <fullName>Non-structural protein 1</fullName>
            <shortName>NS1</shortName>
        </recommendedName>
    </component>
    <component>
        <recommendedName>
            <fullName>Non-structural protein 2A</fullName>
            <shortName>NS2A</shortName>
        </recommendedName>
    </component>
    <component>
        <recommendedName>
            <fullName>Serine protease subunit NS2B</fullName>
        </recommendedName>
        <alternativeName>
            <fullName>Flavivirin protease NS2B regulatory subunit</fullName>
        </alternativeName>
        <alternativeName>
            <fullName>Non-structural protein 2B</fullName>
        </alternativeName>
    </component>
    <component>
        <recommendedName>
            <fullName>Serine protease NS3</fullName>
            <ecNumber>3.4.21.91</ecNumber>
            <ecNumber evidence="19">3.6.1.15</ecNumber>
            <ecNumber evidence="19">3.6.4.13</ecNumber>
        </recommendedName>
        <alternativeName>
            <fullName>Flavivirin protease NS3 catalytic subunit</fullName>
        </alternativeName>
        <alternativeName>
            <fullName>Non-structural protein 3</fullName>
        </alternativeName>
    </component>
    <component>
        <recommendedName>
            <fullName>Non-structural protein 4A</fullName>
            <shortName>NS4A</shortName>
        </recommendedName>
    </component>
    <component>
        <recommendedName>
            <fullName>Peptide 2k</fullName>
        </recommendedName>
    </component>
    <component>
        <recommendedName>
            <fullName>Non-structural protein 4B</fullName>
            <shortName>NS4B</shortName>
        </recommendedName>
    </component>
    <component>
        <recommendedName>
            <fullName>RNA-directed RNA polymerase NS5</fullName>
            <ecNumber evidence="18">2.1.1.56</ecNumber>
            <ecNumber evidence="18">2.1.1.57</ecNumber>
            <ecNumber evidence="18">2.7.7.48</ecNumber>
        </recommendedName>
        <alternativeName>
            <fullName>NS5</fullName>
        </alternativeName>
    </component>
</protein>
<sequence length="3410" mass="378066">MTKKPGRPGRNRAVNMLKRGASRALGPMIKLKRMLFGLLDGRGPLRMVLAILAFFRFTALKPTAGLLKRWGMMDKVHALSLLKGFKKDLASMTDFVHLPKKKSGVSIIGRMLVFSFTAAVRVTLENGMSLMKIQKADVGKVITIRTDRGENRCIVQAMDVGEDCEDTMKYLCPAIENPSEPDDIDCWCDKADAMVTYGRCSKTRHSRRSRRSTNIAGHADSRLDSRGSVWMDTKKATSYLTKAESWALRNPGYALVAAVLGWSLGTSNAQKVIFTVMILLIAPAYSIRCVGVENRDFIEGVSGGTWVDVVLEHGGCVTIMAPDKPTIDLELTSTIAKSMAVTRTYCVQAQVSELSVETRCPTMGEAHNSKSSDAAYVCKKGFSDRGWGNGCGLFGKGSMETCAKFSCQTKAEGRIIQRENLEYTIHMNVHASQETGHFMNDTIASENKHGAKISITATGPSRTADLGDYGMVTLDCEPRAGLDFDNLYLLTLGRNSWLVNRDWFHDVNLPWIGGAEGHWKNRESLVEFGKTHATKREVLALGSQEGTLQVALAGAMIAKFGSNVATINSGHLKCRLKLDKLKIKGTTYHMCKGSFAFTKTPSDTGHGTVLLELTYSGSDGPCRVPISMSVSLSNIEPVGRMVTVNPIVLSSSPQKTIMIEVEPPFGDSFIIAGTGEPRAHYHWRKSGSSIGAAFATTIKGARRLAVIGDDAWDFGSVGGILNSVGKALHQIFGGMFRTLFGGMSWFTQIMIGALCCWLGINARDRTIAVTFLAVGGVLVFLATSVNADSGCALDLKRKEFKCGNGIFVFNDAEAWSHSYRYHPSTPKKLAGSIVRAIEEGQCGVRSVGRLEHEMWRANAREINAILLENEKNLSVVVLESEYYRKAKNLMPIGDEMPFGWKSWGKKFFEEPQLQNQTFVVDGRVGKECPEEKRSWNNFRIEDFGFGVFTTSVWMEQRTEYTEDCDQKVIGAAVKGELAAHSDLGYWIESRSKNGSWELERAYLLESKSCSWPATHTLWNGGVEESELIIPKSRAGPVSHHNTRKGYHNQIKGPWHLTPLEIRFESCPGTTVVTTEECGNRGPSLRTTTTSGKVISEWCCRSCTMPPLSFRTADGCWYGMEIRPLKEREETMVKSHVSAGRGDGVDNLSLGLLVLTIALQEVMRKRILGRHITWMVIAVFMAMILGGLSYRDLGRYLVLVGAAFAERNSGGDLLHLVLVATFKVKPMALLGFVLGGRWCRRQSLLLSIGAVLVNFALEFQGGYFELVDSLALALLFVKAVVQTDTTSVSLPLLAALAPAGCYTVLGTHRFIMLTLVLVTFLGCKKTASVKKAGTAAVGVVLGMVGMKTIPMLGMLMVTSRARRSWPLHEAMAAVGILCALFGALAETEVDLAGPLAAAGLIVMAYVISGRSNDLSIKKVEDVKWSDEAEVTGESVSYHVSLDVRGDPTLTEDSGPGLEKVLLKVGLMAISGIYPVAIPFALGAWFFLEKRCKRAGALWDIPSPREAKPAKVEDGVYRIFSRKLFGESQIGAGVMVKGTFHTMWHVTRGAVLKAGEGLLEPAWADVRKDLICYGGNWKLEEHWDGNEEVQLIALEPGKKVRHIQTKPGIFKTSEGEIGALDLDCMAGTSGSPIVNKNGEVVGLYGNGVLIKGDRYVSAISQKENVGQEDGAEIEDNWFRKRELTVLDLHPGAGKTRRVLPQLVREAVKKRLRTVILAPTRVVASEMYEALRGEPIRYMTPAVQSERTGNEIVDFMCHSTFTMKLFQGVRVPNYNLYIMDEAHFLDPASVAARGYIETRVSMGDAGAIFMTATPPGTTEAFPPSNSPIIDEETRIPDKAWNSGYEWIIEFDGRTVWFVHSIKQGAEIGTCLQKAGKKVLYLNRKTFESEYPKCKSEKWDFVITTDISEMGANFKADRVIDPRKTIKPILLDGRVSMQGPIAITPASAAQRRGRIGRNPEKLGDIYAYSGNVSSDNEGHVSWTEARMLLDNVHVQGGVVAQLYTPEREKTEAYEGEFKLKTNQRKVFSELIRTGDLPVWLAFQVASANVEYHDRKWCFDGPNEHLLLENNQEIEVWTRQGQRRVLKPRWLDGRITSDHLNLKSFKEFASGKRSALSILDLIAVLPSHLNLRLQEALDTAAILSRSEPGSRSYKAALENSPEMIETFLLCALVCLMTIGLVVVLVRGKGPGKLAFGMVSIGVMTWLLWSAGVDPGKIAAAVILVFLLLVVLIPEPEKQRSVQDNQLAMLMLLIATILGGVAANEMGWLEKTKADLSWVVRGRSSTTTPVVELDMKPATAWTLYALATTLLTPLFQHLIVTKYANISLMAIASQAGTLFSMDSGIPFSSIELSVPLLALGCWTQITPCSLILACVLLSTHYAILLPGMQAQAARDAQRRTAAGIMKNAVVDGIVATDIPPLDGAGPLTEKKLGQLLLFAAAVTGVVITRSPRSWSELGVLGSAVGSTLIEGSAGKFWNATTVTAMCNLFRGSYLAGVPLTYTIIRNSNPSNKRGGGIGETLGEKWKARLNQMNTLEFHRYRRSHIMEVDREPARAALKSGDFTRGAAVSRGSAKLRWMHERGYIRLHDKVVDLGCGRGGWCYYSATVKEVKEVKGYTKGGRGHEEPVLTQSYGWNIVQMKSGVDVFYKEAEPCDVVLCDIGECSSSPAVEADRSTKVLELAERWLERNDGADFCIKVLCPYMPEVVEKLSKLQLRYGGCLVRNPLSRNSTHEMYWVSGYKGNLIGVINSTSALLLRRMEIKFAEPRYEEDVNLSCGTRAVSIAPPKFDYKKIGQRVERLKAEHMSTWHYDCEHPYRTWAYHGSYVVKPSGSASSQVNGVVKLLSKPWDVSSEVTGMSMTDTTPFGQQRVFKEKVDTKAPEPPAGAEMASVIVSEWLWKRLNREKKPRLCTKEEFVRKVRGNAALGPVFEEENQWKDAAEAVQDPGFWNLVDMERKNHLEGKCETCVYNMMGKREKKRGEFGKAKGSRAIWYMWLGARFLEFEALGFLNEDHWMSRGNSGGGVEGLGIQKLGYVMREIGEKGGILYADDTAGWDTRITECDLRNEAHIMEYMENEHRKLARAIFELTYKHKVVKVMRPGKGVPLMDIISREDQRGSGQVVTYALNTFTNLVVQLIRMAEAECVLTPEDLHEMSQSAKLRLLKWLKEEGWERLTRMAVSGDDCVVAAPDARFGAALTFLNAMSKIRKDIKEWTPSKGWKNWEEVPFCSHHFHRLQMKDGRELVVPCRSQDELIGRARVTQGPGDLMSSACLAKAYAQMWQLLYFHRRDLRLMGNAICSAVPVDWVPTGRTTWSIHGKGEWMTSENMLEVWNRVWIEENEHMEDKTPVREWTDIPYLGKREDPWCGSYIGYRPRSTWAENIKVPVNVIRVKIGGNKYQDYLGTQKRYESEKRVEFRGVL</sequence>
<feature type="chain" id="PRO_0000441516" description="Genome polyprotein">
    <location>
        <begin position="1"/>
        <end position="3410"/>
    </location>
</feature>
<feature type="chain" id="PRO_0000441517" description="Capsid protein C" evidence="2">
    <location>
        <begin position="1"/>
        <end position="102"/>
    </location>
</feature>
<feature type="propeptide" id="PRO_0000441518" description="ER anchor for the capsid protein C, removed in mature form by serine protease NS3" evidence="2">
    <location>
        <begin position="103"/>
        <end position="119"/>
    </location>
</feature>
<feature type="chain" id="PRO_0000441519" description="Protein prM" evidence="2">
    <location>
        <begin position="120"/>
        <end position="286"/>
    </location>
</feature>
<feature type="chain" id="PRO_0000441520" description="Peptide pr" evidence="2">
    <location>
        <begin position="120"/>
        <end position="211"/>
    </location>
</feature>
<feature type="chain" id="PRO_0000441521" description="Small envelope protein M" evidence="2">
    <location>
        <begin position="212"/>
        <end position="286"/>
    </location>
</feature>
<feature type="chain" id="PRO_0000441522" description="Envelope protein E" evidence="2">
    <location>
        <begin position="287"/>
        <end position="787"/>
    </location>
</feature>
<feature type="chain" id="PRO_0000441523" description="Non-structural protein 1" evidence="2">
    <location>
        <begin position="788"/>
        <end position="1138"/>
    </location>
</feature>
<feature type="chain" id="PRO_0000441524" description="Non-structural protein 2A" evidence="2">
    <location>
        <begin position="1139"/>
        <end position="1362"/>
    </location>
</feature>
<feature type="chain" id="PRO_0000441525" description="Serine protease subunit NS2B" evidence="2">
    <location>
        <begin position="1363"/>
        <end position="1492"/>
    </location>
</feature>
<feature type="chain" id="PRO_0000441526" description="Serine protease NS3" evidence="2">
    <location>
        <begin position="1493"/>
        <end position="2108"/>
    </location>
</feature>
<feature type="chain" id="PRO_0000441527" description="Non-structural protein 4A" evidence="2">
    <location>
        <begin position="2109"/>
        <end position="2234"/>
    </location>
</feature>
<feature type="peptide" id="PRO_0000441528" description="Peptide 2k" evidence="2">
    <location>
        <begin position="2235"/>
        <end position="2257"/>
    </location>
</feature>
<feature type="chain" id="PRO_0000441529" description="Non-structural protein 4B" evidence="2">
    <location>
        <begin position="2258"/>
        <end position="2507"/>
    </location>
</feature>
<feature type="chain" id="PRO_0000441530" description="RNA-directed RNA polymerase NS5" evidence="2">
    <location>
        <begin position="2508"/>
        <end position="3410"/>
    </location>
</feature>
<feature type="topological domain" description="Cytoplasmic" evidence="11">
    <location>
        <begin position="1"/>
        <end position="103"/>
    </location>
</feature>
<feature type="transmembrane region" description="Helical" evidence="11">
    <location>
        <begin position="104"/>
        <end position="124"/>
    </location>
</feature>
<feature type="topological domain" description="Extracellular" evidence="11">
    <location>
        <begin position="125"/>
        <end position="245"/>
    </location>
</feature>
<feature type="transmembrane region" description="Helical" evidence="11">
    <location>
        <begin position="246"/>
        <end position="266"/>
    </location>
</feature>
<feature type="topological domain" description="Cytoplasmic" evidence="11">
    <location>
        <begin position="267"/>
        <end position="271"/>
    </location>
</feature>
<feature type="transmembrane region" description="Helical" evidence="20">
    <location>
        <begin position="272"/>
        <end position="286"/>
    </location>
</feature>
<feature type="topological domain" description="Extracellular" evidence="11">
    <location>
        <begin position="287"/>
        <end position="739"/>
    </location>
</feature>
<feature type="transmembrane region" description="Helical" evidence="11">
    <location>
        <begin position="740"/>
        <end position="760"/>
    </location>
</feature>
<feature type="topological domain" description="Cytoplasmic" evidence="11">
    <location>
        <begin position="761"/>
        <end position="766"/>
    </location>
</feature>
<feature type="transmembrane region" description="Helical" evidence="11">
    <location>
        <begin position="767"/>
        <end position="787"/>
    </location>
</feature>
<feature type="topological domain" description="Extracellular" evidence="11">
    <location>
        <begin position="788"/>
        <end position="1165"/>
    </location>
</feature>
<feature type="transmembrane region" description="Helical" evidence="11">
    <location>
        <begin position="1166"/>
        <end position="1186"/>
    </location>
</feature>
<feature type="topological domain" description="Cytoplasmic" evidence="11">
    <location>
        <begin position="1187"/>
        <end position="1214"/>
    </location>
</feature>
<feature type="transmembrane region" description="Helical" evidence="11">
    <location>
        <begin position="1215"/>
        <end position="1235"/>
    </location>
</feature>
<feature type="topological domain" description="Lumenal" evidence="11">
    <location>
        <begin position="1236"/>
        <end position="1242"/>
    </location>
</feature>
<feature type="transmembrane region" description="Helical" evidence="11">
    <location>
        <begin position="1243"/>
        <end position="1263"/>
    </location>
</feature>
<feature type="topological domain" description="Cytoplasmic" evidence="11">
    <location>
        <begin position="1264"/>
        <end position="1284"/>
    </location>
</feature>
<feature type="transmembrane region" description="Helical" evidence="11">
    <location>
        <begin position="1285"/>
        <end position="1305"/>
    </location>
</feature>
<feature type="topological domain" description="Lumenal" evidence="11">
    <location>
        <begin position="1306"/>
        <end position="1335"/>
    </location>
</feature>
<feature type="transmembrane region" description="Helical" evidence="11">
    <location>
        <begin position="1336"/>
        <end position="1356"/>
    </location>
</feature>
<feature type="topological domain" description="Cytoplasmic" evidence="11">
    <location>
        <begin position="1357"/>
        <end position="1363"/>
    </location>
</feature>
<feature type="transmembrane region" description="Helical" evidence="11">
    <location>
        <begin position="1364"/>
        <end position="1384"/>
    </location>
</feature>
<feature type="topological domain" description="Lumenal" evidence="11">
    <location>
        <begin position="1385"/>
        <end position="1387"/>
    </location>
</feature>
<feature type="transmembrane region" description="Helical" evidence="11">
    <location>
        <begin position="1388"/>
        <end position="1408"/>
    </location>
</feature>
<feature type="topological domain" description="Cytoplasmic" evidence="11">
    <location>
        <begin position="1409"/>
        <end position="1464"/>
    </location>
</feature>
<feature type="intramembrane region" description="Helical" evidence="11">
    <location>
        <begin position="1465"/>
        <end position="1485"/>
    </location>
</feature>
<feature type="topological domain" description="Cytoplasmic" evidence="11">
    <location>
        <begin position="1486"/>
        <end position="2158"/>
    </location>
</feature>
<feature type="transmembrane region" description="Helical" evidence="11">
    <location>
        <begin position="2159"/>
        <end position="2179"/>
    </location>
</feature>
<feature type="topological domain" description="Lumenal" evidence="11">
    <location>
        <begin position="2180"/>
        <end position="2185"/>
    </location>
</feature>
<feature type="intramembrane region" description="Helical" evidence="11">
    <location>
        <begin position="2186"/>
        <end position="2205"/>
    </location>
</feature>
<feature type="topological domain" description="Lumenal" evidence="11">
    <location>
        <position position="2206"/>
    </location>
</feature>
<feature type="transmembrane region" description="Helical" evidence="11">
    <location>
        <begin position="2207"/>
        <end position="2227"/>
    </location>
</feature>
<feature type="topological domain" description="Cytoplasmic" evidence="11">
    <location>
        <begin position="2228"/>
        <end position="2242"/>
    </location>
</feature>
<feature type="transmembrane region" description="Helical; Note=Signal for NS4B" evidence="20">
    <location>
        <begin position="2243"/>
        <end position="2257"/>
    </location>
</feature>
<feature type="topological domain" description="Lumenal" evidence="11">
    <location>
        <begin position="2258"/>
        <end position="2293"/>
    </location>
</feature>
<feature type="intramembrane region" description="Helical" evidence="11">
    <location>
        <begin position="2294"/>
        <end position="2314"/>
    </location>
</feature>
<feature type="topological domain" description="Lumenal" evidence="11">
    <location>
        <begin position="2315"/>
        <end position="2336"/>
    </location>
</feature>
<feature type="transmembrane region" description="Helical" evidence="11">
    <location>
        <begin position="2337"/>
        <end position="2357"/>
    </location>
</feature>
<feature type="topological domain" description="Cytoplasmic" evidence="11">
    <location>
        <position position="2358"/>
    </location>
</feature>
<feature type="transmembrane region" description="Helical" evidence="11">
    <location>
        <begin position="2359"/>
        <end position="2379"/>
    </location>
</feature>
<feature type="topological domain" description="Lumenal" evidence="11">
    <location>
        <begin position="2380"/>
        <end position="2420"/>
    </location>
</feature>
<feature type="transmembrane region" description="Helical" evidence="11">
    <location>
        <begin position="2421"/>
        <end position="2441"/>
    </location>
</feature>
<feature type="topological domain" description="Cytoplasmic" evidence="11">
    <location>
        <begin position="2442"/>
        <end position="3410"/>
    </location>
</feature>
<feature type="domain" description="Peptidase S7" evidence="17">
    <location>
        <begin position="1493"/>
        <end position="1670"/>
    </location>
</feature>
<feature type="domain" description="Helicase ATP-binding" evidence="14">
    <location>
        <begin position="1673"/>
        <end position="1829"/>
    </location>
</feature>
<feature type="domain" description="Helicase C-terminal" evidence="15">
    <location>
        <begin position="1839"/>
        <end position="2006"/>
    </location>
</feature>
<feature type="domain" description="mRNA cap 0-1 NS5-type MT" evidence="18">
    <location>
        <begin position="2508"/>
        <end position="2773"/>
    </location>
</feature>
<feature type="domain" description="RdRp catalytic" evidence="13">
    <location>
        <begin position="3036"/>
        <end position="3187"/>
    </location>
</feature>
<feature type="region of interest" description="Interaction with host EXOC1" evidence="2">
    <location>
        <begin position="2"/>
        <end position="15"/>
    </location>
</feature>
<feature type="region of interest" description="Hydrophobic; homodimerization of capsid protein C" evidence="7">
    <location>
        <begin position="38"/>
        <end position="73"/>
    </location>
</feature>
<feature type="region of interest" description="Fusion peptide" evidence="4">
    <location>
        <begin position="384"/>
        <end position="397"/>
    </location>
</feature>
<feature type="region of interest" description="Interacts with and activates NS3 protease" evidence="16">
    <location>
        <begin position="1415"/>
        <end position="1454"/>
    </location>
</feature>
<feature type="region of interest" description="Important for RNA-binding" evidence="5">
    <location>
        <begin position="1677"/>
        <end position="1680"/>
    </location>
</feature>
<feature type="region of interest" description="Regulates the ATPase activity of NS3 helicase" evidence="10">
    <location>
        <begin position="2153"/>
        <end position="2157"/>
    </location>
</feature>
<feature type="short sequence motif" description="DEAH box" evidence="14">
    <location>
        <begin position="1777"/>
        <end position="1780"/>
    </location>
</feature>
<feature type="active site" description="Charge relay system; for serine protease NS3 activity" evidence="17">
    <location>
        <position position="1543"/>
    </location>
</feature>
<feature type="active site" description="Charge relay system; for serine protease NS3 activity" evidence="17">
    <location>
        <position position="1567"/>
    </location>
</feature>
<feature type="active site" description="Charge relay system; for serine protease NS3 activity" evidence="17">
    <location>
        <position position="1627"/>
    </location>
</feature>
<feature type="active site" description="For 2'-O-MTase activity" evidence="9">
    <location>
        <position position="2568"/>
    </location>
</feature>
<feature type="active site" description="For 2'-O-MTase activity" evidence="9">
    <location>
        <position position="2653"/>
    </location>
</feature>
<feature type="active site" description="For 2'-O-MTase activity" evidence="9">
    <location>
        <position position="2690"/>
    </location>
</feature>
<feature type="active site" description="For 2'-O-MTase activity" evidence="9">
    <location>
        <position position="2726"/>
    </location>
</feature>
<feature type="binding site" evidence="14">
    <location>
        <begin position="1686"/>
        <end position="1693"/>
    </location>
    <ligand>
        <name>ATP</name>
        <dbReference type="ChEBI" id="CHEBI:30616"/>
    </ligand>
</feature>
<feature type="binding site" evidence="18">
    <location>
        <position position="2563"/>
    </location>
    <ligand>
        <name>S-adenosyl-L-methionine</name>
        <dbReference type="ChEBI" id="CHEBI:59789"/>
    </ligand>
</feature>
<feature type="binding site" evidence="18">
    <location>
        <position position="2593"/>
    </location>
    <ligand>
        <name>S-adenosyl-L-methionine</name>
        <dbReference type="ChEBI" id="CHEBI:59789"/>
    </ligand>
</feature>
<feature type="binding site" evidence="18">
    <location>
        <position position="2594"/>
    </location>
    <ligand>
        <name>S-adenosyl-L-methionine</name>
        <dbReference type="ChEBI" id="CHEBI:59789"/>
    </ligand>
</feature>
<feature type="binding site" evidence="18">
    <location>
        <position position="2611"/>
    </location>
    <ligand>
        <name>S-adenosyl-L-methionine</name>
        <dbReference type="ChEBI" id="CHEBI:59789"/>
    </ligand>
</feature>
<feature type="binding site" evidence="18">
    <location>
        <position position="2612"/>
    </location>
    <ligand>
        <name>S-adenosyl-L-methionine</name>
        <dbReference type="ChEBI" id="CHEBI:59789"/>
    </ligand>
</feature>
<feature type="binding site" evidence="18">
    <location>
        <position position="2638"/>
    </location>
    <ligand>
        <name>S-adenosyl-L-methionine</name>
        <dbReference type="ChEBI" id="CHEBI:59789"/>
    </ligand>
</feature>
<feature type="binding site" evidence="18">
    <location>
        <position position="2639"/>
    </location>
    <ligand>
        <name>S-adenosyl-L-methionine</name>
        <dbReference type="ChEBI" id="CHEBI:59789"/>
    </ligand>
</feature>
<feature type="binding site" evidence="18">
    <location>
        <position position="2654"/>
    </location>
    <ligand>
        <name>S-adenosyl-L-methionine</name>
        <dbReference type="ChEBI" id="CHEBI:59789"/>
    </ligand>
</feature>
<feature type="binding site" evidence="18">
    <location>
        <position position="2728"/>
    </location>
    <ligand>
        <name>S-adenosyl-L-methionine</name>
        <dbReference type="ChEBI" id="CHEBI:59789"/>
    </ligand>
</feature>
<feature type="binding site" evidence="3">
    <location>
        <position position="2947"/>
    </location>
    <ligand>
        <name>Zn(2+)</name>
        <dbReference type="ChEBI" id="CHEBI:29105"/>
        <label>1</label>
    </ligand>
</feature>
<feature type="binding site" evidence="3">
    <location>
        <position position="2951"/>
    </location>
    <ligand>
        <name>Zn(2+)</name>
        <dbReference type="ChEBI" id="CHEBI:29105"/>
        <label>1</label>
    </ligand>
</feature>
<feature type="binding site" evidence="3">
    <location>
        <position position="2956"/>
    </location>
    <ligand>
        <name>Zn(2+)</name>
        <dbReference type="ChEBI" id="CHEBI:29105"/>
        <label>1</label>
    </ligand>
</feature>
<feature type="binding site" evidence="3">
    <location>
        <position position="2959"/>
    </location>
    <ligand>
        <name>Zn(2+)</name>
        <dbReference type="ChEBI" id="CHEBI:29105"/>
        <label>1</label>
    </ligand>
</feature>
<feature type="binding site" evidence="3">
    <location>
        <position position="3222"/>
    </location>
    <ligand>
        <name>Zn(2+)</name>
        <dbReference type="ChEBI" id="CHEBI:29105"/>
        <label>2</label>
    </ligand>
</feature>
<feature type="binding site" evidence="3">
    <location>
        <position position="3238"/>
    </location>
    <ligand>
        <name>Zn(2+)</name>
        <dbReference type="ChEBI" id="CHEBI:29105"/>
        <label>2</label>
    </ligand>
</feature>
<feature type="binding site" evidence="3">
    <location>
        <position position="3356"/>
    </location>
    <ligand>
        <name>Zn(2+)</name>
        <dbReference type="ChEBI" id="CHEBI:29105"/>
        <label>2</label>
    </ligand>
</feature>
<feature type="site" description="Cleavage; by viral protease NS3" evidence="2">
    <location>
        <begin position="102"/>
        <end position="103"/>
    </location>
</feature>
<feature type="site" description="Cleavage; by host signal peptidase" evidence="2">
    <location>
        <begin position="121"/>
        <end position="122"/>
    </location>
</feature>
<feature type="site" description="Cleavage; by host furin" evidence="2">
    <location>
        <begin position="211"/>
        <end position="212"/>
    </location>
</feature>
<feature type="site" description="Cleavage; by host signal peptidase" evidence="2">
    <location>
        <begin position="286"/>
        <end position="287"/>
    </location>
</feature>
<feature type="site" description="Cleavage; by host signal peptidase" evidence="2">
    <location>
        <begin position="787"/>
        <end position="788"/>
    </location>
</feature>
<feature type="site" description="Cleavage; by host" evidence="2">
    <location>
        <begin position="1138"/>
        <end position="1139"/>
    </location>
</feature>
<feature type="site" description="Cleavage; by viral protease NS3" evidence="2">
    <location>
        <begin position="1362"/>
        <end position="1363"/>
    </location>
</feature>
<feature type="site" description="Cleavage; by autolysis" evidence="2">
    <location>
        <begin position="1492"/>
        <end position="1493"/>
    </location>
</feature>
<feature type="site" description="Substrate binding" evidence="19">
    <location>
        <position position="1692"/>
    </location>
</feature>
<feature type="site" description="Involved in NS3 ATPase and RTPase activities" evidence="3">
    <location>
        <position position="1947"/>
    </location>
</feature>
<feature type="site" description="Involved in NS3 ATPase and RTPase activities" evidence="3">
    <location>
        <position position="1950"/>
    </location>
</feature>
<feature type="site" description="Substrate binding" evidence="19">
    <location>
        <position position="1950"/>
    </location>
</feature>
<feature type="site" description="Substrate binding" evidence="19">
    <location>
        <position position="1953"/>
    </location>
</feature>
<feature type="site" description="Cleavage; by autolysis" evidence="2">
    <location>
        <begin position="2108"/>
        <end position="2109"/>
    </location>
</feature>
<feature type="site" description="Cleavage; by viral protease NS3" evidence="2">
    <location>
        <begin position="2234"/>
        <end position="2235"/>
    </location>
</feature>
<feature type="site" description="Cleavage; by host signal peptidase" evidence="11">
    <location>
        <begin position="2257"/>
        <end position="2258"/>
    </location>
</feature>
<feature type="site" description="Cleavage; by viral protease NS3" evidence="2">
    <location>
        <begin position="2507"/>
        <end position="2508"/>
    </location>
</feature>
<feature type="site" description="mRNA cap binding" evidence="18">
    <location>
        <position position="2520"/>
    </location>
</feature>
<feature type="site" description="mRNA cap binding; via carbonyl oxygen" evidence="18">
    <location>
        <position position="2523"/>
    </location>
</feature>
<feature type="site" description="mRNA cap binding" evidence="18">
    <location>
        <position position="2524"/>
    </location>
</feature>
<feature type="site" description="mRNA cap binding; via carbonyl oxygen" evidence="18">
    <location>
        <position position="2526"/>
    </location>
</feature>
<feature type="site" description="mRNA cap binding" evidence="18">
    <location>
        <position position="2531"/>
    </location>
</feature>
<feature type="site" description="mRNA cap binding" evidence="18">
    <location>
        <position position="2535"/>
    </location>
</feature>
<feature type="site" description="Essential for 2'-O-methyltransferase activity" evidence="18">
    <location>
        <position position="2568"/>
    </location>
</feature>
<feature type="site" description="Essential for 2'-O-methyltransferase and N-7 methyltransferase activity" evidence="18">
    <location>
        <position position="2653"/>
    </location>
</feature>
<feature type="site" description="Essential for 2'-O-methyltransferase activity" evidence="18">
    <location>
        <position position="2690"/>
    </location>
</feature>
<feature type="site" description="mRNA cap binding" evidence="18">
    <location>
        <position position="2721"/>
    </location>
</feature>
<feature type="site" description="mRNA cap binding" evidence="18">
    <location>
        <position position="2723"/>
    </location>
</feature>
<feature type="site" description="Essential for 2'-O-methyltransferase activity" evidence="18">
    <location>
        <position position="2726"/>
    </location>
</feature>
<feature type="modified residue" description="N6-acetyllysine; by host" evidence="8">
    <location>
        <position position="1881"/>
    </location>
</feature>
<feature type="modified residue" description="Phosphoserine" evidence="1">
    <location>
        <position position="2563"/>
    </location>
</feature>
<feature type="glycosylation site" description="N-linked (GlcNAc...) asparagine; by host" evidence="12">
    <location>
        <position position="440"/>
    </location>
</feature>
<feature type="glycosylation site" description="N-linked (GlcNAc...) asparagine; by host" evidence="10">
    <location>
        <position position="915"/>
    </location>
</feature>
<feature type="disulfide bond" evidence="2">
    <location>
        <begin position="289"/>
        <end position="316"/>
    </location>
</feature>
<feature type="disulfide bond" evidence="6">
    <location>
        <begin position="346"/>
        <end position="407"/>
    </location>
</feature>
<feature type="disulfide bond" evidence="2">
    <location>
        <begin position="346"/>
        <end position="402"/>
    </location>
</feature>
<feature type="disulfide bond" evidence="2">
    <location>
        <begin position="360"/>
        <end position="391"/>
    </location>
</feature>
<feature type="disulfide bond" evidence="2">
    <location>
        <begin position="378"/>
        <end position="407"/>
    </location>
</feature>
<feature type="disulfide bond" evidence="6">
    <location>
        <begin position="378"/>
        <end position="402"/>
    </location>
</feature>
<feature type="disulfide bond" evidence="2">
    <location>
        <begin position="476"/>
        <end position="574"/>
    </location>
</feature>
<feature type="disulfide bond" evidence="2">
    <location>
        <begin position="591"/>
        <end position="622"/>
    </location>
</feature>
<feature type="disulfide bond" evidence="6">
    <location>
        <begin position="791"/>
        <end position="802"/>
    </location>
</feature>
<feature type="disulfide bond" evidence="6">
    <location>
        <begin position="842"/>
        <end position="928"/>
    </location>
</feature>
<feature type="disulfide bond" evidence="6">
    <location>
        <begin position="964"/>
        <end position="1009"/>
    </location>
</feature>
<feature type="disulfide bond" evidence="6">
    <location>
        <begin position="1066"/>
        <end position="1115"/>
    </location>
</feature>
<feature type="disulfide bond" evidence="6">
    <location>
        <begin position="1077"/>
        <end position="1099"/>
    </location>
</feature>
<feature type="disulfide bond" evidence="10">
    <location>
        <begin position="1077"/>
        <end position="1098"/>
    </location>
</feature>
<feature type="disulfide bond" evidence="6">
    <location>
        <begin position="1098"/>
        <end position="1102"/>
    </location>
</feature>
<feature type="disulfide bond" evidence="10">
    <location>
        <begin position="1099"/>
        <end position="1102"/>
    </location>
</feature>
<feature type="mutagenesis site" description="Severe decrease in helicase activity." evidence="19">
    <original>M</original>
    <variation>T</variation>
    <location>
        <position position="1724"/>
    </location>
</feature>
<feature type="strand" evidence="22">
    <location>
        <begin position="1681"/>
        <end position="1685"/>
    </location>
</feature>
<feature type="turn" evidence="22">
    <location>
        <begin position="1692"/>
        <end position="1695"/>
    </location>
</feature>
<feature type="helix" evidence="22">
    <location>
        <begin position="1696"/>
        <end position="1706"/>
    </location>
</feature>
<feature type="strand" evidence="22">
    <location>
        <begin position="1711"/>
        <end position="1717"/>
    </location>
</feature>
<feature type="helix" evidence="22">
    <location>
        <begin position="1718"/>
        <end position="1727"/>
    </location>
</feature>
<feature type="turn" evidence="22">
    <location>
        <begin position="1728"/>
        <end position="1730"/>
    </location>
</feature>
<feature type="strand" evidence="22">
    <location>
        <begin position="1733"/>
        <end position="1735"/>
    </location>
</feature>
<feature type="strand" evidence="22">
    <location>
        <begin position="1749"/>
        <end position="1754"/>
    </location>
</feature>
<feature type="helix" evidence="22">
    <location>
        <begin position="1755"/>
        <end position="1764"/>
    </location>
</feature>
<feature type="strand" evidence="22">
    <location>
        <begin position="1772"/>
        <end position="1778"/>
    </location>
</feature>
<feature type="helix" evidence="22">
    <location>
        <begin position="1784"/>
        <end position="1798"/>
    </location>
</feature>
<feature type="strand" evidence="22">
    <location>
        <begin position="1803"/>
        <end position="1810"/>
    </location>
</feature>
<feature type="strand" evidence="22">
    <location>
        <begin position="1826"/>
        <end position="1829"/>
    </location>
</feature>
<feature type="helix" evidence="22">
    <location>
        <begin position="1842"/>
        <end position="1845"/>
    </location>
</feature>
<feature type="strand" evidence="22">
    <location>
        <begin position="1851"/>
        <end position="1854"/>
    </location>
</feature>
<feature type="helix" evidence="22">
    <location>
        <begin position="1858"/>
        <end position="1870"/>
    </location>
</feature>
<feature type="strand" evidence="22">
    <location>
        <begin position="1875"/>
        <end position="1879"/>
    </location>
</feature>
<feature type="turn" evidence="22">
    <location>
        <begin position="1880"/>
        <end position="1882"/>
    </location>
</feature>
<feature type="helix" evidence="22">
    <location>
        <begin position="1883"/>
        <end position="1886"/>
    </location>
</feature>
<feature type="helix" evidence="22">
    <location>
        <begin position="1889"/>
        <end position="1892"/>
    </location>
</feature>
<feature type="strand" evidence="22">
    <location>
        <begin position="1896"/>
        <end position="1900"/>
    </location>
</feature>
<feature type="helix" evidence="22">
    <location>
        <begin position="1902"/>
        <end position="1905"/>
    </location>
</feature>
<feature type="strand" evidence="22">
    <location>
        <begin position="1913"/>
        <end position="1917"/>
    </location>
</feature>
<feature type="strand" evidence="22">
    <location>
        <begin position="1920"/>
        <end position="1927"/>
    </location>
</feature>
<feature type="strand" evidence="22">
    <location>
        <begin position="1930"/>
        <end position="1938"/>
    </location>
</feature>
<feature type="helix" evidence="22">
    <location>
        <begin position="1941"/>
        <end position="1948"/>
    </location>
</feature>
<feature type="strand" evidence="22">
    <location>
        <begin position="1961"/>
        <end position="1964"/>
    </location>
</feature>
<feature type="helix" evidence="22">
    <location>
        <begin position="1976"/>
        <end position="1985"/>
    </location>
</feature>
<feature type="helix" evidence="22">
    <location>
        <begin position="2000"/>
        <end position="2005"/>
    </location>
</feature>
<feature type="turn" evidence="22">
    <location>
        <begin position="2010"/>
        <end position="2013"/>
    </location>
</feature>
<feature type="helix" evidence="22">
    <location>
        <begin position="2017"/>
        <end position="2028"/>
    </location>
</feature>
<feature type="helix" evidence="22">
    <location>
        <begin position="2034"/>
        <end position="2042"/>
    </location>
</feature>
<feature type="helix" evidence="22">
    <location>
        <begin position="2051"/>
        <end position="2053"/>
    </location>
</feature>
<feature type="helix" evidence="22">
    <location>
        <begin position="2058"/>
        <end position="2060"/>
    </location>
</feature>
<feature type="strand" evidence="22">
    <location>
        <begin position="2070"/>
        <end position="2072"/>
    </location>
</feature>
<feature type="strand" evidence="22">
    <location>
        <begin position="2078"/>
        <end position="2080"/>
    </location>
</feature>
<feature type="helix" evidence="22">
    <location>
        <begin position="2088"/>
        <end position="2091"/>
    </location>
</feature>
<feature type="helix" evidence="22">
    <location>
        <begin position="2094"/>
        <end position="2104"/>
    </location>
</feature>
<comment type="function">
    <molecule>Capsid protein C</molecule>
    <text evidence="6">Plays a role in virus budding by binding to the cell membrane and gathering the viral RNA into a nucleocapsid that forms the core of a mature virus particle. During virus entry, may induce genome penetration into the host cytoplasm after hemifusion induced by the surface proteins. Can migrate to the cell nucleus where it modulates host functions. Overcomes the anti-viral effects of host EXOC1 by sequestering and degrading the latter through the proteasome degradation pathway.</text>
</comment>
<comment type="function">
    <molecule>Capsid protein C</molecule>
    <text evidence="1">Inhibits RNA silencing by interfering with host Dicer.</text>
</comment>
<comment type="function">
    <molecule>Peptide pr</molecule>
    <text evidence="6">Prevents premature fusion activity of envelope proteins in trans-Golgi by binding to envelope protein E at pH6.0. After virion release in extracellular space, gets dissociated from E dimers.</text>
</comment>
<comment type="function">
    <molecule>Protein prM</molecule>
    <text evidence="6">Acts as a chaperone for envelope protein E during intracellular virion assembly by masking and inactivating envelope protein E fusion peptide. prM is the only viral peptide matured by host furin in the trans-Golgi network probably to avoid catastrophic activation of the viral fusion activity in acidic Golgi compartment prior to virion release. prM-E cleavage is inefficient, and many virions are only partially matured. These uncleaved prM would play a role in immune evasion.</text>
</comment>
<comment type="function">
    <molecule>Small envelope protein M</molecule>
    <text evidence="6">May play a role in virus budding. Exerts cytotoxic effects by activating a mitochondrial apoptotic pathway through M ectodomain. May display a viroporin activity.</text>
</comment>
<comment type="function">
    <molecule>Envelope protein E</molecule>
    <text evidence="6">Binds to host cell surface receptor and mediates fusion between viral and cellular membranes. Envelope protein is synthesized in the endoplasmic reticulum in the form of heterodimer with protein prM. They play a role in virion budding in the ER, and the newly formed immature particle is covered with 60 spikes composed of heterodimer between precursor prM and envelope protein E. The virion is transported to the Golgi apparatus where the low pH causes dissociation of PrM-E heterodimers and formation of E homodimers. prM-E cleavage is inefficient, and many virions are only partially matured. These uncleaved prM would play a role in immune evasion.</text>
</comment>
<comment type="function">
    <molecule>Non-structural protein 1</molecule>
    <text evidence="10">Involved in immune evasion, pathogenesis and viral replication. Once cleaved off the polyprotein, is targeted to three destinations: the viral replication cycle, the plasma membrane and the extracellular compartment. Essential for viral replication. Required for formation of the replication complex and recruitment of other non-structural proteins to the ER-derived membrane structures. Excreted as a hexameric lipoparticle that plays a role against host immune response. Antagonizing the complement function. Binds to the host macrophages and dendritic cells. Inhibits signal transduction originating from Toll-like receptor 3 (TLR3).</text>
</comment>
<comment type="function">
    <molecule>Non-structural protein 2A</molecule>
    <text evidence="3">Component of the viral RNA replication complex that functions in virion assembly and antagonizes the host alpha/beta interferon antiviral response.</text>
</comment>
<comment type="function">
    <molecule>Serine protease subunit NS2B</molecule>
    <text evidence="6 16">Required cofactor for the serine protease function of NS3. May have membrane-destabilizing activity and form viroporins (By similarity).</text>
</comment>
<comment type="function">
    <molecule>Serine protease NS3</molecule>
    <text evidence="17 19">Displays three enzymatic activities: serine protease, NTPase and RNA helicase. NS3 serine protease, in association with NS2B, performs its autocleavage and cleaves the polyprotein at dibasic sites in the cytoplasm: C-prM, NS2A-NS2B, NS2B-NS3, NS3-NS4A, NS4A-2K and NS4B-NS5. NS3 RNA helicase binds RNA and unwinds dsRNA in the 3' to 5' direction (PubMed:18004778).</text>
</comment>
<comment type="function">
    <molecule>Non-structural protein 4A</molecule>
    <text evidence="10">Regulates the ATPase activity of the NS3 helicase activity. NS4A allows NS3 helicase to conserve energy during unwinding.</text>
</comment>
<comment type="function">
    <molecule>Peptide 2k</molecule>
    <text evidence="6">Functions as a signal peptide for NS4B and is required for the interferon antagonism activity of the latter.</text>
</comment>
<comment type="function">
    <molecule>Non-structural protein 4B</molecule>
    <text evidence="10">Induces the formation of ER-derived membrane vesicles where the viral replication takes place. Inhibits interferon (IFN)-induced host STAT1 phosphorylation and nuclear translocation, thereby preventing the establishment of cellular antiviral state by blocking the IFN-alpha/beta pathway. Inhibits STAT2 translocation in the nucleus after IFN-alpha treatment.</text>
</comment>
<comment type="function">
    <molecule>RNA-directed RNA polymerase NS5</molecule>
    <text evidence="10">Replicates the viral (+) and (-) RNA genome, and performs the capping of genomes in the cytoplasm. NS5 methylates viral RNA cap at guanine N-7 and ribose 2'-O positions. Besides its role in RNA genome replication, also prevents the establishment of cellular antiviral state by blocking the interferon-alpha/beta (IFN-alpha/beta) signaling pathway. Inhibits host TYK2 and STAT2 phosphorylation, thereby preventing activation of JAK-STAT signaling pathway.</text>
</comment>
<comment type="catalytic activity">
    <reaction>
        <text>Selective hydrolysis of -Xaa-Xaa-|-Yaa- bonds in which each of the Xaa can be either Arg or Lys and Yaa can be either Ser or Ala.</text>
        <dbReference type="EC" id="3.4.21.91"/>
    </reaction>
</comment>
<comment type="catalytic activity">
    <reaction evidence="13">
        <text>RNA(n) + a ribonucleoside 5'-triphosphate = RNA(n+1) + diphosphate</text>
        <dbReference type="Rhea" id="RHEA:21248"/>
        <dbReference type="Rhea" id="RHEA-COMP:14527"/>
        <dbReference type="Rhea" id="RHEA-COMP:17342"/>
        <dbReference type="ChEBI" id="CHEBI:33019"/>
        <dbReference type="ChEBI" id="CHEBI:61557"/>
        <dbReference type="ChEBI" id="CHEBI:140395"/>
        <dbReference type="EC" id="2.7.7.48"/>
    </reaction>
</comment>
<comment type="catalytic activity">
    <reaction>
        <text>a ribonucleoside 5'-triphosphate + H2O = a ribonucleoside 5'-diphosphate + phosphate + H(+)</text>
        <dbReference type="Rhea" id="RHEA:23680"/>
        <dbReference type="ChEBI" id="CHEBI:15377"/>
        <dbReference type="ChEBI" id="CHEBI:15378"/>
        <dbReference type="ChEBI" id="CHEBI:43474"/>
        <dbReference type="ChEBI" id="CHEBI:57930"/>
        <dbReference type="ChEBI" id="CHEBI:61557"/>
        <dbReference type="EC" id="3.6.1.15"/>
    </reaction>
</comment>
<comment type="catalytic activity">
    <reaction evidence="19">
        <text>ATP + H2O = ADP + phosphate + H(+)</text>
        <dbReference type="Rhea" id="RHEA:13065"/>
        <dbReference type="ChEBI" id="CHEBI:15377"/>
        <dbReference type="ChEBI" id="CHEBI:15378"/>
        <dbReference type="ChEBI" id="CHEBI:30616"/>
        <dbReference type="ChEBI" id="CHEBI:43474"/>
        <dbReference type="ChEBI" id="CHEBI:456216"/>
        <dbReference type="EC" id="3.6.4.13"/>
    </reaction>
</comment>
<comment type="catalytic activity">
    <reaction evidence="18">
        <text>a 5'-end (5'-triphosphoguanosine)-ribonucleoside in mRNA + S-adenosyl-L-methionine = a 5'-end (N(7)-methyl 5'-triphosphoguanosine)-ribonucleoside in mRNA + S-adenosyl-L-homocysteine</text>
        <dbReference type="Rhea" id="RHEA:67008"/>
        <dbReference type="Rhea" id="RHEA-COMP:17166"/>
        <dbReference type="Rhea" id="RHEA-COMP:17167"/>
        <dbReference type="ChEBI" id="CHEBI:57856"/>
        <dbReference type="ChEBI" id="CHEBI:59789"/>
        <dbReference type="ChEBI" id="CHEBI:156461"/>
        <dbReference type="ChEBI" id="CHEBI:167617"/>
        <dbReference type="EC" id="2.1.1.56"/>
    </reaction>
</comment>
<comment type="catalytic activity">
    <reaction evidence="18">
        <text>a 5'-end (N(7)-methyl 5'-triphosphoguanosine)-ribonucleoside in mRNA + S-adenosyl-L-methionine = a 5'-end (N(7)-methyl 5'-triphosphoguanosine)-(2'-O-methyl-ribonucleoside) in mRNA + S-adenosyl-L-homocysteine + H(+)</text>
        <dbReference type="Rhea" id="RHEA:67020"/>
        <dbReference type="Rhea" id="RHEA-COMP:17167"/>
        <dbReference type="Rhea" id="RHEA-COMP:17168"/>
        <dbReference type="ChEBI" id="CHEBI:15378"/>
        <dbReference type="ChEBI" id="CHEBI:57856"/>
        <dbReference type="ChEBI" id="CHEBI:59789"/>
        <dbReference type="ChEBI" id="CHEBI:156461"/>
        <dbReference type="ChEBI" id="CHEBI:167609"/>
        <dbReference type="EC" id="2.1.1.57"/>
    </reaction>
</comment>
<comment type="biophysicochemical properties">
    <kinetics>
        <KM evidence="19">340 mM for ATPase of serine protease NS3</KM>
    </kinetics>
</comment>
<comment type="subunit">
    <molecule>Capsid protein C</molecule>
    <text evidence="6">Homodimer (By similarity). Interacts (via N-terminus) with host EXOC1 (via C-terminus); this interaction results in EXOC1 degradation through the proteasome degradation pathway (By similarity).</text>
</comment>
<comment type="subunit">
    <molecule>Protein prM</molecule>
    <text evidence="6">Forms heterodimers with envelope protein E in the endoplasmic reticulum and Golgi.</text>
</comment>
<comment type="subunit">
    <molecule>Envelope protein E</molecule>
    <text evidence="6">Homodimer; in the endoplasmic reticulum and Golgi (By similarity). Interacts with protein prM (By similarity). Interacts with non-structural protein 1 (By similarity).</text>
</comment>
<comment type="subunit">
    <molecule>Non-structural protein 1</molecule>
    <text evidence="10">Homodimer; Homohexamer when secreted (By similarity). Interacts with envelope protein E (By similarity). NS1 interacts with NS4B (By similarity). Interacts with host complement protein CFH; this interaction leads to the degradation of C3 (By similarity).</text>
</comment>
<comment type="subunit">
    <molecule>Non-structural protein 2A</molecule>
    <text evidence="1">Interacts (via N-terminus) with serine protease NS3.</text>
</comment>
<comment type="subunit">
    <molecule>Serine protease subunit NS2B</molecule>
    <text evidence="6">Forms a heterodimer with serine protease NS3 (By similarity). May form homooligomers (By similarity).</text>
</comment>
<comment type="subunit">
    <molecule>Serine protease NS3</molecule>
    <text evidence="6">Forms a heterodimer with NS2B (By similarity). Interacts with non-structural protein 2A (via N-terminus) (By similarity). Interacts with NS4B (By similarity). Interacts with unphosphorylated RNA-directed RNA polymerase NS5; this interaction stimulates RNA-directed RNA polymerase NS5 guanylyltransferase activity (By similarity).</text>
</comment>
<comment type="subunit">
    <molecule>Non-structural protein 4B</molecule>
    <text evidence="6">Interacts with serine protease NS3 (By similarity).</text>
</comment>
<comment type="subunit">
    <molecule>RNA-directed RNA polymerase NS5</molecule>
    <text evidence="6">Homodimer (By similarity). Interacts with host STAT2; this interaction inhibits the phosphorylation of the latter, and, when all viral proteins are present (polyprotein), targets STAT2 for degradation (By similarity).</text>
</comment>
<comment type="subcellular location">
    <molecule>Capsid protein C</molecule>
    <subcellularLocation>
        <location evidence="6">Virion</location>
    </subcellularLocation>
    <subcellularLocation>
        <location evidence="6">Host nucleus</location>
    </subcellularLocation>
    <subcellularLocation>
        <location evidence="2">Host cytoplasm</location>
    </subcellularLocation>
    <subcellularLocation>
        <location evidence="2">Host cytoplasm</location>
        <location evidence="2">Host perinuclear region</location>
    </subcellularLocation>
</comment>
<comment type="subcellular location">
    <molecule>Peptide pr</molecule>
    <subcellularLocation>
        <location evidence="6">Secreted</location>
    </subcellularLocation>
</comment>
<comment type="subcellular location">
    <molecule>Small envelope protein M</molecule>
    <subcellularLocation>
        <location evidence="1">Virion membrane</location>
        <topology evidence="1">Multi-pass membrane protein</topology>
    </subcellularLocation>
    <subcellularLocation>
        <location evidence="1">Host endoplasmic reticulum membrane</location>
        <topology evidence="11">Multi-pass membrane protein</topology>
    </subcellularLocation>
    <text evidence="1">ER membrane retention is mediated by the transmembrane domains.</text>
</comment>
<comment type="subcellular location">
    <molecule>Envelope protein E</molecule>
    <subcellularLocation>
        <location evidence="20">Virion membrane</location>
        <topology evidence="1">Multi-pass membrane protein</topology>
    </subcellularLocation>
    <subcellularLocation>
        <location evidence="1">Host endoplasmic reticulum membrane</location>
        <topology evidence="11">Multi-pass membrane protein</topology>
    </subcellularLocation>
    <text evidence="1">ER membrane retention is mediated by the transmembrane domains.</text>
</comment>
<comment type="subcellular location">
    <molecule>Non-structural protein 1</molecule>
    <subcellularLocation>
        <location evidence="6">Secreted</location>
    </subcellularLocation>
    <subcellularLocation>
        <location>Host endoplasmic reticulum membrane</location>
        <topology>Peripheral membrane protein</topology>
        <orientation evidence="6">Lumenal side</orientation>
    </subcellularLocation>
    <text evidence="10">Located in RE-derived vesicles hosting the replication complex.</text>
</comment>
<comment type="subcellular location">
    <molecule>Non-structural protein 2A</molecule>
    <subcellularLocation>
        <location evidence="3">Host endoplasmic reticulum membrane</location>
        <topology evidence="6">Multi-pass membrane protein</topology>
    </subcellularLocation>
</comment>
<comment type="subcellular location">
    <molecule>Serine protease subunit NS2B</molecule>
    <subcellularLocation>
        <location>Host endoplasmic reticulum membrane</location>
        <topology evidence="6">Multi-pass membrane protein</topology>
    </subcellularLocation>
</comment>
<comment type="subcellular location">
    <molecule>Serine protease NS3</molecule>
    <subcellularLocation>
        <location evidence="17">Host endoplasmic reticulum membrane</location>
        <topology evidence="17">Peripheral membrane protein</topology>
        <orientation evidence="17">Cytoplasmic side</orientation>
    </subcellularLocation>
    <text evidence="17">Remains non-covalently associated to serine protease subunit NS2B.</text>
</comment>
<comment type="subcellular location">
    <molecule>Non-structural protein 4A</molecule>
    <subcellularLocation>
        <location evidence="3">Host endoplasmic reticulum membrane</location>
        <topology evidence="6">Multi-pass membrane protein</topology>
    </subcellularLocation>
    <text evidence="6">Located in RE-associated vesicles hosting the replication complex.</text>
</comment>
<comment type="subcellular location">
    <molecule>Non-structural protein 4B</molecule>
    <subcellularLocation>
        <location evidence="6">Host endoplasmic reticulum membrane</location>
        <topology evidence="6">Multi-pass membrane protein</topology>
    </subcellularLocation>
    <text evidence="10">Located in RE-derived vesicles hosting the replication complex.</text>
</comment>
<comment type="subcellular location">
    <molecule>RNA-directed RNA polymerase NS5</molecule>
    <subcellularLocation>
        <location>Host endoplasmic reticulum membrane</location>
        <topology>Peripheral membrane protein</topology>
        <orientation>Cytoplasmic side</orientation>
    </subcellularLocation>
    <subcellularLocation>
        <location evidence="2">Host nucleus</location>
    </subcellularLocation>
    <text evidence="6">Located in RE-associated vesicles hosting the replication complex. NS5 protein is mainly localized in the nucleus rather than in ER vesicles.</text>
</comment>
<comment type="domain">
    <text evidence="6">The transmembrane domains of the small envelope protein M and envelope protein E contain an endoplasmic reticulum retention signal.</text>
</comment>
<comment type="PTM">
    <molecule>Genome polyprotein</molecule>
    <text evidence="6">Specific enzymatic cleavages in vivo yield mature proteins. Cleavages in the lumen of endoplasmic reticulum are performed by host signal peptidase, whereas cleavages in the cytoplasmic side are performed by serine protease NS3. Signal cleavage at the 2K-4B site requires a prior NS3 protease-mediated cleavage at the 4A-2K site.</text>
</comment>
<comment type="PTM">
    <molecule>Protein prM</molecule>
    <text evidence="6">Cleaved in post-Golgi vesicles by a host furin, releasing the mature small envelope protein M, and peptide pr. This cleavage is incomplete as up to 30% of viral particles still carry uncleaved prM.</text>
</comment>
<comment type="PTM">
    <molecule>Envelope protein E</molecule>
    <text evidence="6">N-glycosylated.</text>
</comment>
<comment type="PTM">
    <molecule>Non-structural protein 1</molecule>
    <text evidence="6">N-glycosylated. The excreted form is glycosylated and this is required for efficient secretion of the protein from infected cells.</text>
</comment>
<comment type="PTM">
    <molecule>Serine protease NS3</molecule>
    <text evidence="8">Acetylated by host KAT5. Acetylation modulates NS3 RNA-binding and unwinding activities and plays an important positive role for viral replication.</text>
</comment>
<comment type="PTM">
    <molecule>RNA-directed RNA polymerase NS5</molecule>
    <text evidence="6">Phosphorylated on serines residues. This phosphorylation may trigger NS5 nuclear localization.</text>
</comment>
<comment type="similarity">
    <text evidence="18">In the N-terminal section; belongs to the class I-like SAM-binding methyltransferase superfamily. mRNA cap 0-1 NS5-type methyltransferase family.</text>
</comment>
<organismHost>
    <name type="scientific">Culex annulirostris</name>
    <name type="common">Common banded mosquito</name>
    <dbReference type="NCBI Taxonomy" id="162997"/>
</organismHost>
<organismHost>
    <name type="scientific">Homo sapiens</name>
    <name type="common">Human</name>
    <dbReference type="NCBI Taxonomy" id="9606"/>
</organismHost>
<organismHost>
    <name type="scientific">Ochlerotatus camptorhynchus</name>
    <dbReference type="NCBI Taxonomy" id="644619"/>
</organismHost>
<organismHost>
    <name type="scientific">Ochlerotatus vigilax</name>
    <dbReference type="NCBI Taxonomy" id="569589"/>
</organismHost>
<reference key="1">
    <citation type="journal article" date="2005" name="Clin. Microbiol. Rev.">
        <title>Biological transmission of arboviruses: reexamination of and new insights into components, mechanisms, and unique traits as well as their evolutionary trends.</title>
        <authorList>
            <person name="Kuno G."/>
            <person name="Chang G.J."/>
        </authorList>
    </citation>
    <scope>NUCLEOTIDE SEQUENCE [LARGE SCALE GENOMIC RNA]</scope>
    <source>
        <strain evidence="21">AusMRM 32</strain>
    </source>
</reference>
<reference key="2">
    <citation type="journal article" date="2008" name="Proteins">
        <title>Structure and biochemical analysis of Kokobera virus helicase.</title>
        <authorList>
            <person name="Speroni S."/>
            <person name="De Colibus L."/>
            <person name="Mastrangelo E."/>
            <person name="Gould E."/>
            <person name="Coutard B."/>
            <person name="Forrester N.L."/>
            <person name="Blanc S."/>
            <person name="Canard B."/>
            <person name="Mattevi A."/>
        </authorList>
    </citation>
    <scope>X-RAY CRYSTALLOGRAPHY (2.10 ANGSTROMS) OF 1678-2108</scope>
    <scope>FUNCTION (SERINE PROTEASE NS3)</scope>
    <scope>BIOPHYSICOCHEMICAL PROPERTIES (SERINE PROTEASE NS3)</scope>
    <scope>MUTAGENESIS OF MET-1724</scope>
    <scope>CATALYTIC ACTIVITY (SERINE PROTEASE NS3)</scope>
</reference>